<protein>
    <recommendedName>
        <fullName evidence="1">Large ribosomal subunit protein bL20</fullName>
    </recommendedName>
    <alternativeName>
        <fullName evidence="2">50S ribosomal protein L20</fullName>
    </alternativeName>
</protein>
<comment type="function">
    <text evidence="1">Binds directly to 23S ribosomal RNA and is necessary for the in vitro assembly process of the 50S ribosomal subunit. It is not involved in the protein synthesizing functions of that subunit.</text>
</comment>
<comment type="similarity">
    <text evidence="1">Belongs to the bacterial ribosomal protein bL20 family.</text>
</comment>
<dbReference type="EMBL" id="CP000462">
    <property type="protein sequence ID" value="ABK37115.1"/>
    <property type="molecule type" value="Genomic_DNA"/>
</dbReference>
<dbReference type="RefSeq" id="WP_005300683.1">
    <property type="nucleotide sequence ID" value="NC_008570.1"/>
</dbReference>
<dbReference type="RefSeq" id="YP_856847.1">
    <property type="nucleotide sequence ID" value="NC_008570.1"/>
</dbReference>
<dbReference type="SMR" id="A0KKP6"/>
<dbReference type="STRING" id="380703.AHA_2324"/>
<dbReference type="EnsemblBacteria" id="ABK37115">
    <property type="protein sequence ID" value="ABK37115"/>
    <property type="gene ID" value="AHA_2324"/>
</dbReference>
<dbReference type="GeneID" id="92723352"/>
<dbReference type="KEGG" id="aha:AHA_2324"/>
<dbReference type="PATRIC" id="fig|380703.7.peg.2325"/>
<dbReference type="eggNOG" id="COG0292">
    <property type="taxonomic scope" value="Bacteria"/>
</dbReference>
<dbReference type="HOGENOM" id="CLU_123265_0_1_6"/>
<dbReference type="OrthoDB" id="9808966at2"/>
<dbReference type="PRO" id="PR:A0KKP6"/>
<dbReference type="Proteomes" id="UP000000756">
    <property type="component" value="Chromosome"/>
</dbReference>
<dbReference type="GO" id="GO:1990904">
    <property type="term" value="C:ribonucleoprotein complex"/>
    <property type="evidence" value="ECO:0007669"/>
    <property type="project" value="UniProtKB-KW"/>
</dbReference>
<dbReference type="GO" id="GO:0005840">
    <property type="term" value="C:ribosome"/>
    <property type="evidence" value="ECO:0007669"/>
    <property type="project" value="UniProtKB-KW"/>
</dbReference>
<dbReference type="GO" id="GO:0019843">
    <property type="term" value="F:rRNA binding"/>
    <property type="evidence" value="ECO:0007669"/>
    <property type="project" value="UniProtKB-UniRule"/>
</dbReference>
<dbReference type="GO" id="GO:0003735">
    <property type="term" value="F:structural constituent of ribosome"/>
    <property type="evidence" value="ECO:0007669"/>
    <property type="project" value="InterPro"/>
</dbReference>
<dbReference type="GO" id="GO:0000027">
    <property type="term" value="P:ribosomal large subunit assembly"/>
    <property type="evidence" value="ECO:0007669"/>
    <property type="project" value="UniProtKB-UniRule"/>
</dbReference>
<dbReference type="GO" id="GO:0006412">
    <property type="term" value="P:translation"/>
    <property type="evidence" value="ECO:0007669"/>
    <property type="project" value="InterPro"/>
</dbReference>
<dbReference type="CDD" id="cd07026">
    <property type="entry name" value="Ribosomal_L20"/>
    <property type="match status" value="1"/>
</dbReference>
<dbReference type="FunFam" id="1.10.1900.20:FF:000001">
    <property type="entry name" value="50S ribosomal protein L20"/>
    <property type="match status" value="1"/>
</dbReference>
<dbReference type="Gene3D" id="6.10.160.10">
    <property type="match status" value="1"/>
</dbReference>
<dbReference type="Gene3D" id="1.10.1900.20">
    <property type="entry name" value="Ribosomal protein L20"/>
    <property type="match status" value="1"/>
</dbReference>
<dbReference type="HAMAP" id="MF_00382">
    <property type="entry name" value="Ribosomal_bL20"/>
    <property type="match status" value="1"/>
</dbReference>
<dbReference type="InterPro" id="IPR005813">
    <property type="entry name" value="Ribosomal_bL20"/>
</dbReference>
<dbReference type="InterPro" id="IPR049946">
    <property type="entry name" value="RIBOSOMAL_L20_CS"/>
</dbReference>
<dbReference type="InterPro" id="IPR035566">
    <property type="entry name" value="Ribosomal_protein_bL20_C"/>
</dbReference>
<dbReference type="NCBIfam" id="TIGR01032">
    <property type="entry name" value="rplT_bact"/>
    <property type="match status" value="1"/>
</dbReference>
<dbReference type="PANTHER" id="PTHR10986">
    <property type="entry name" value="39S RIBOSOMAL PROTEIN L20"/>
    <property type="match status" value="1"/>
</dbReference>
<dbReference type="Pfam" id="PF00453">
    <property type="entry name" value="Ribosomal_L20"/>
    <property type="match status" value="1"/>
</dbReference>
<dbReference type="PRINTS" id="PR00062">
    <property type="entry name" value="RIBOSOMALL20"/>
</dbReference>
<dbReference type="SUPFAM" id="SSF74731">
    <property type="entry name" value="Ribosomal protein L20"/>
    <property type="match status" value="1"/>
</dbReference>
<dbReference type="PROSITE" id="PS00937">
    <property type="entry name" value="RIBOSOMAL_L20"/>
    <property type="match status" value="1"/>
</dbReference>
<accession>A0KKP6</accession>
<reference key="1">
    <citation type="journal article" date="2006" name="J. Bacteriol.">
        <title>Genome sequence of Aeromonas hydrophila ATCC 7966T: jack of all trades.</title>
        <authorList>
            <person name="Seshadri R."/>
            <person name="Joseph S.W."/>
            <person name="Chopra A.K."/>
            <person name="Sha J."/>
            <person name="Shaw J."/>
            <person name="Graf J."/>
            <person name="Haft D.H."/>
            <person name="Wu M."/>
            <person name="Ren Q."/>
            <person name="Rosovitz M.J."/>
            <person name="Madupu R."/>
            <person name="Tallon L."/>
            <person name="Kim M."/>
            <person name="Jin S."/>
            <person name="Vuong H."/>
            <person name="Stine O.C."/>
            <person name="Ali A."/>
            <person name="Horneman A.J."/>
            <person name="Heidelberg J.F."/>
        </authorList>
    </citation>
    <scope>NUCLEOTIDE SEQUENCE [LARGE SCALE GENOMIC DNA]</scope>
    <source>
        <strain>ATCC 7966 / DSM 30187 / BCRC 13018 / CCUG 14551 / JCM 1027 / KCTC 2358 / NCIMB 9240 / NCTC 8049</strain>
    </source>
</reference>
<keyword id="KW-1185">Reference proteome</keyword>
<keyword id="KW-0687">Ribonucleoprotein</keyword>
<keyword id="KW-0689">Ribosomal protein</keyword>
<keyword id="KW-0694">RNA-binding</keyword>
<keyword id="KW-0699">rRNA-binding</keyword>
<organism>
    <name type="scientific">Aeromonas hydrophila subsp. hydrophila (strain ATCC 7966 / DSM 30187 / BCRC 13018 / CCUG 14551 / JCM 1027 / KCTC 2358 / NCIMB 9240 / NCTC 8049)</name>
    <dbReference type="NCBI Taxonomy" id="380703"/>
    <lineage>
        <taxon>Bacteria</taxon>
        <taxon>Pseudomonadati</taxon>
        <taxon>Pseudomonadota</taxon>
        <taxon>Gammaproteobacteria</taxon>
        <taxon>Aeromonadales</taxon>
        <taxon>Aeromonadaceae</taxon>
        <taxon>Aeromonas</taxon>
    </lineage>
</organism>
<sequence length="118" mass="13426">MPRVKRGVTARARHKKVMKAAKGYYGARSRVYRVAVQAVTKAGQYAYRDRRQKKRQFRQLWIARINAAARQNGLSYSRLINGLKKASIEIDRKILSDIAVHDKLAFTALVEKAKAALV</sequence>
<feature type="chain" id="PRO_1000048920" description="Large ribosomal subunit protein bL20">
    <location>
        <begin position="1"/>
        <end position="118"/>
    </location>
</feature>
<name>RL20_AERHH</name>
<evidence type="ECO:0000255" key="1">
    <source>
        <dbReference type="HAMAP-Rule" id="MF_00382"/>
    </source>
</evidence>
<evidence type="ECO:0000305" key="2"/>
<proteinExistence type="inferred from homology"/>
<gene>
    <name evidence="1" type="primary">rplT</name>
    <name type="ordered locus">AHA_2324</name>
</gene>